<keyword id="KW-0067">ATP-binding</keyword>
<keyword id="KW-0963">Cytoplasm</keyword>
<keyword id="KW-0227">DNA damage</keyword>
<keyword id="KW-0233">DNA recombination</keyword>
<keyword id="KW-0234">DNA repair</keyword>
<keyword id="KW-0238">DNA-binding</keyword>
<keyword id="KW-0378">Hydrolase</keyword>
<keyword id="KW-0547">Nucleotide-binding</keyword>
<gene>
    <name evidence="1" type="primary">ruvB</name>
    <name type="ordered locus">BLD_0453</name>
</gene>
<comment type="function">
    <text evidence="1">The RuvA-RuvB-RuvC complex processes Holliday junction (HJ) DNA during genetic recombination and DNA repair, while the RuvA-RuvB complex plays an important role in the rescue of blocked DNA replication forks via replication fork reversal (RFR). RuvA specifically binds to HJ cruciform DNA, conferring on it an open structure. The RuvB hexamer acts as an ATP-dependent pump, pulling dsDNA into and through the RuvAB complex. RuvB forms 2 homohexamers on either side of HJ DNA bound by 1 or 2 RuvA tetramers; 4 subunits per hexamer contact DNA at a time. Coordinated motions by a converter formed by DNA-disengaged RuvB subunits stimulates ATP hydrolysis and nucleotide exchange. Immobilization of the converter enables RuvB to convert the ATP-contained energy into a lever motion, pulling 2 nucleotides of DNA out of the RuvA tetramer per ATP hydrolyzed, thus driving DNA branch migration. The RuvB motors rotate together with the DNA substrate, which together with the progressing nucleotide cycle form the mechanistic basis for DNA recombination by continuous HJ branch migration. Branch migration allows RuvC to scan DNA until it finds its consensus sequence, where it cleaves and resolves cruciform DNA.</text>
</comment>
<comment type="catalytic activity">
    <reaction evidence="1">
        <text>ATP + H2O = ADP + phosphate + H(+)</text>
        <dbReference type="Rhea" id="RHEA:13065"/>
        <dbReference type="ChEBI" id="CHEBI:15377"/>
        <dbReference type="ChEBI" id="CHEBI:15378"/>
        <dbReference type="ChEBI" id="CHEBI:30616"/>
        <dbReference type="ChEBI" id="CHEBI:43474"/>
        <dbReference type="ChEBI" id="CHEBI:456216"/>
    </reaction>
</comment>
<comment type="subunit">
    <text evidence="1">Homohexamer. Forms an RuvA(8)-RuvB(12)-Holliday junction (HJ) complex. HJ DNA is sandwiched between 2 RuvA tetramers; dsDNA enters through RuvA and exits via RuvB. An RuvB hexamer assembles on each DNA strand where it exits the tetramer. Each RuvB hexamer is contacted by two RuvA subunits (via domain III) on 2 adjacent RuvB subunits; this complex drives branch migration. In the full resolvosome a probable DNA-RuvA(4)-RuvB(12)-RuvC(2) complex forms which resolves the HJ.</text>
</comment>
<comment type="subcellular location">
    <subcellularLocation>
        <location evidence="1">Cytoplasm</location>
    </subcellularLocation>
</comment>
<comment type="domain">
    <text evidence="1">Has 3 domains, the large (RuvB-L) and small ATPase (RuvB-S) domains and the C-terminal head (RuvB-H) domain. The head domain binds DNA, while the ATPase domains jointly bind ATP, ADP or are empty depending on the state of the subunit in the translocation cycle. During a single DNA translocation step the structure of each domain remains the same, but their relative positions change.</text>
</comment>
<comment type="similarity">
    <text evidence="1">Belongs to the RuvB family.</text>
</comment>
<sequence>MSETTDYGASNTGANEESLRMVSSQPIGNEPVSDEELRPHVLGGFIGQPRLKAQLQLFLDAARKRDVPPDHILLAGPPGLGKTTLAMIVANELEVPIRVTSGPAVQHAGDLASILSSLDVGEVLFIDEIHRLPRAAEELLYIAMEDFRVDVMVGKGPGASSIPLTLPRFTVIGATTREGMLPSPLRARFGFTAHLDFYPHEELEKLIERSANVLGVNLDTGSAHELALRSRGTPRIANRLLRRVRDWAIVHDLIVVRPDDVKEALALYQIDSEGLDRLDIAVLNAIVRNFNGGPVGLNNLAAMVGEESETVETVCEPYLVREGFMIRTPKGRVATELADIIFGNYAQR</sequence>
<proteinExistence type="inferred from homology"/>
<organism>
    <name type="scientific">Bifidobacterium longum (strain DJO10A)</name>
    <dbReference type="NCBI Taxonomy" id="205913"/>
    <lineage>
        <taxon>Bacteria</taxon>
        <taxon>Bacillati</taxon>
        <taxon>Actinomycetota</taxon>
        <taxon>Actinomycetes</taxon>
        <taxon>Bifidobacteriales</taxon>
        <taxon>Bifidobacteriaceae</taxon>
        <taxon>Bifidobacterium</taxon>
    </lineage>
</organism>
<reference key="1">
    <citation type="journal article" date="2008" name="BMC Genomics">
        <title>Comparative genomic analysis of the gut bacterium Bifidobacterium longum reveals loci susceptible to deletion during pure culture growth.</title>
        <authorList>
            <person name="Lee J.H."/>
            <person name="Karamychev V.N."/>
            <person name="Kozyavkin S.A."/>
            <person name="Mills D."/>
            <person name="Pavlov A.R."/>
            <person name="Pavlova N.V."/>
            <person name="Polouchine N.N."/>
            <person name="Richardson P.M."/>
            <person name="Shakhova V.V."/>
            <person name="Slesarev A.I."/>
            <person name="Weimer B."/>
            <person name="O'Sullivan D.J."/>
        </authorList>
    </citation>
    <scope>NUCLEOTIDE SEQUENCE [LARGE SCALE GENOMIC DNA]</scope>
    <source>
        <strain>DJO10A</strain>
    </source>
</reference>
<dbReference type="EC" id="3.6.4.-" evidence="1"/>
<dbReference type="EMBL" id="CP000605">
    <property type="protein sequence ID" value="ACD97899.1"/>
    <property type="molecule type" value="Genomic_DNA"/>
</dbReference>
<dbReference type="SMR" id="B3DRY0"/>
<dbReference type="KEGG" id="blj:BLD_0453"/>
<dbReference type="HOGENOM" id="CLU_055599_1_0_11"/>
<dbReference type="Proteomes" id="UP000002419">
    <property type="component" value="Chromosome"/>
</dbReference>
<dbReference type="GO" id="GO:0005737">
    <property type="term" value="C:cytoplasm"/>
    <property type="evidence" value="ECO:0007669"/>
    <property type="project" value="UniProtKB-SubCell"/>
</dbReference>
<dbReference type="GO" id="GO:0048476">
    <property type="term" value="C:Holliday junction resolvase complex"/>
    <property type="evidence" value="ECO:0007669"/>
    <property type="project" value="UniProtKB-UniRule"/>
</dbReference>
<dbReference type="GO" id="GO:0005524">
    <property type="term" value="F:ATP binding"/>
    <property type="evidence" value="ECO:0007669"/>
    <property type="project" value="UniProtKB-UniRule"/>
</dbReference>
<dbReference type="GO" id="GO:0016887">
    <property type="term" value="F:ATP hydrolysis activity"/>
    <property type="evidence" value="ECO:0007669"/>
    <property type="project" value="InterPro"/>
</dbReference>
<dbReference type="GO" id="GO:0000400">
    <property type="term" value="F:four-way junction DNA binding"/>
    <property type="evidence" value="ECO:0007669"/>
    <property type="project" value="UniProtKB-UniRule"/>
</dbReference>
<dbReference type="GO" id="GO:0009378">
    <property type="term" value="F:four-way junction helicase activity"/>
    <property type="evidence" value="ECO:0007669"/>
    <property type="project" value="InterPro"/>
</dbReference>
<dbReference type="GO" id="GO:0006310">
    <property type="term" value="P:DNA recombination"/>
    <property type="evidence" value="ECO:0007669"/>
    <property type="project" value="UniProtKB-UniRule"/>
</dbReference>
<dbReference type="GO" id="GO:0006281">
    <property type="term" value="P:DNA repair"/>
    <property type="evidence" value="ECO:0007669"/>
    <property type="project" value="UniProtKB-UniRule"/>
</dbReference>
<dbReference type="CDD" id="cd00009">
    <property type="entry name" value="AAA"/>
    <property type="match status" value="1"/>
</dbReference>
<dbReference type="Gene3D" id="1.10.8.60">
    <property type="match status" value="1"/>
</dbReference>
<dbReference type="Gene3D" id="3.40.50.300">
    <property type="entry name" value="P-loop containing nucleotide triphosphate hydrolases"/>
    <property type="match status" value="1"/>
</dbReference>
<dbReference type="Gene3D" id="1.10.10.10">
    <property type="entry name" value="Winged helix-like DNA-binding domain superfamily/Winged helix DNA-binding domain"/>
    <property type="match status" value="1"/>
</dbReference>
<dbReference type="HAMAP" id="MF_00016">
    <property type="entry name" value="DNA_HJ_migration_RuvB"/>
    <property type="match status" value="1"/>
</dbReference>
<dbReference type="InterPro" id="IPR003593">
    <property type="entry name" value="AAA+_ATPase"/>
</dbReference>
<dbReference type="InterPro" id="IPR041445">
    <property type="entry name" value="AAA_lid_4"/>
</dbReference>
<dbReference type="InterPro" id="IPR004605">
    <property type="entry name" value="DNA_helicase_Holl-junc_RuvB"/>
</dbReference>
<dbReference type="InterPro" id="IPR027417">
    <property type="entry name" value="P-loop_NTPase"/>
</dbReference>
<dbReference type="InterPro" id="IPR008824">
    <property type="entry name" value="RuvB-like_N"/>
</dbReference>
<dbReference type="InterPro" id="IPR008823">
    <property type="entry name" value="RuvB_C"/>
</dbReference>
<dbReference type="InterPro" id="IPR036388">
    <property type="entry name" value="WH-like_DNA-bd_sf"/>
</dbReference>
<dbReference type="InterPro" id="IPR036390">
    <property type="entry name" value="WH_DNA-bd_sf"/>
</dbReference>
<dbReference type="NCBIfam" id="NF000868">
    <property type="entry name" value="PRK00080.1"/>
    <property type="match status" value="1"/>
</dbReference>
<dbReference type="NCBIfam" id="TIGR00635">
    <property type="entry name" value="ruvB"/>
    <property type="match status" value="1"/>
</dbReference>
<dbReference type="PANTHER" id="PTHR42848">
    <property type="match status" value="1"/>
</dbReference>
<dbReference type="PANTHER" id="PTHR42848:SF1">
    <property type="entry name" value="HOLLIDAY JUNCTION BRANCH MIGRATION COMPLEX SUBUNIT RUVB"/>
    <property type="match status" value="1"/>
</dbReference>
<dbReference type="Pfam" id="PF17864">
    <property type="entry name" value="AAA_lid_4"/>
    <property type="match status" value="1"/>
</dbReference>
<dbReference type="Pfam" id="PF05491">
    <property type="entry name" value="RuvB_C"/>
    <property type="match status" value="1"/>
</dbReference>
<dbReference type="Pfam" id="PF05496">
    <property type="entry name" value="RuvB_N"/>
    <property type="match status" value="1"/>
</dbReference>
<dbReference type="SMART" id="SM00382">
    <property type="entry name" value="AAA"/>
    <property type="match status" value="1"/>
</dbReference>
<dbReference type="SUPFAM" id="SSF52540">
    <property type="entry name" value="P-loop containing nucleoside triphosphate hydrolases"/>
    <property type="match status" value="1"/>
</dbReference>
<dbReference type="SUPFAM" id="SSF46785">
    <property type="entry name" value="Winged helix' DNA-binding domain"/>
    <property type="match status" value="1"/>
</dbReference>
<protein>
    <recommendedName>
        <fullName evidence="1">Holliday junction branch migration complex subunit RuvB</fullName>
        <ecNumber evidence="1">3.6.4.-</ecNumber>
    </recommendedName>
</protein>
<evidence type="ECO:0000255" key="1">
    <source>
        <dbReference type="HAMAP-Rule" id="MF_00016"/>
    </source>
</evidence>
<feature type="chain" id="PRO_1000089618" description="Holliday junction branch migration complex subunit RuvB">
    <location>
        <begin position="1"/>
        <end position="348"/>
    </location>
</feature>
<feature type="region of interest" description="Large ATPase domain (RuvB-L)" evidence="1">
    <location>
        <begin position="4"/>
        <end position="198"/>
    </location>
</feature>
<feature type="region of interest" description="Small ATPAse domain (RuvB-S)" evidence="1">
    <location>
        <begin position="199"/>
        <end position="269"/>
    </location>
</feature>
<feature type="region of interest" description="Head domain (RuvB-H)" evidence="1">
    <location>
        <begin position="272"/>
        <end position="348"/>
    </location>
</feature>
<feature type="binding site" evidence="1">
    <location>
        <position position="37"/>
    </location>
    <ligand>
        <name>ATP</name>
        <dbReference type="ChEBI" id="CHEBI:30616"/>
    </ligand>
</feature>
<feature type="binding site" evidence="1">
    <location>
        <position position="38"/>
    </location>
    <ligand>
        <name>ATP</name>
        <dbReference type="ChEBI" id="CHEBI:30616"/>
    </ligand>
</feature>
<feature type="binding site" evidence="1">
    <location>
        <position position="79"/>
    </location>
    <ligand>
        <name>ATP</name>
        <dbReference type="ChEBI" id="CHEBI:30616"/>
    </ligand>
</feature>
<feature type="binding site" evidence="1">
    <location>
        <position position="82"/>
    </location>
    <ligand>
        <name>ATP</name>
        <dbReference type="ChEBI" id="CHEBI:30616"/>
    </ligand>
</feature>
<feature type="binding site" evidence="1">
    <location>
        <position position="83"/>
    </location>
    <ligand>
        <name>ATP</name>
        <dbReference type="ChEBI" id="CHEBI:30616"/>
    </ligand>
</feature>
<feature type="binding site" evidence="1">
    <location>
        <position position="83"/>
    </location>
    <ligand>
        <name>Mg(2+)</name>
        <dbReference type="ChEBI" id="CHEBI:18420"/>
    </ligand>
</feature>
<feature type="binding site" evidence="1">
    <location>
        <position position="84"/>
    </location>
    <ligand>
        <name>ATP</name>
        <dbReference type="ChEBI" id="CHEBI:30616"/>
    </ligand>
</feature>
<feature type="binding site" evidence="1">
    <location>
        <begin position="145"/>
        <end position="147"/>
    </location>
    <ligand>
        <name>ATP</name>
        <dbReference type="ChEBI" id="CHEBI:30616"/>
    </ligand>
</feature>
<feature type="binding site" evidence="1">
    <location>
        <position position="188"/>
    </location>
    <ligand>
        <name>ATP</name>
        <dbReference type="ChEBI" id="CHEBI:30616"/>
    </ligand>
</feature>
<feature type="binding site" evidence="1">
    <location>
        <position position="198"/>
    </location>
    <ligand>
        <name>ATP</name>
        <dbReference type="ChEBI" id="CHEBI:30616"/>
    </ligand>
</feature>
<feature type="binding site" evidence="1">
    <location>
        <position position="235"/>
    </location>
    <ligand>
        <name>ATP</name>
        <dbReference type="ChEBI" id="CHEBI:30616"/>
    </ligand>
</feature>
<feature type="binding site" evidence="1">
    <location>
        <position position="327"/>
    </location>
    <ligand>
        <name>DNA</name>
        <dbReference type="ChEBI" id="CHEBI:16991"/>
    </ligand>
</feature>
<feature type="binding site" evidence="1">
    <location>
        <position position="332"/>
    </location>
    <ligand>
        <name>DNA</name>
        <dbReference type="ChEBI" id="CHEBI:16991"/>
    </ligand>
</feature>
<accession>B3DRY0</accession>
<name>RUVB_BIFLD</name>